<organism>
    <name type="scientific">Chelativorans sp. (strain BNC1)</name>
    <dbReference type="NCBI Taxonomy" id="266779"/>
    <lineage>
        <taxon>Bacteria</taxon>
        <taxon>Pseudomonadati</taxon>
        <taxon>Pseudomonadota</taxon>
        <taxon>Alphaproteobacteria</taxon>
        <taxon>Hyphomicrobiales</taxon>
        <taxon>Phyllobacteriaceae</taxon>
        <taxon>Chelativorans</taxon>
    </lineage>
</organism>
<comment type="function">
    <text evidence="1">Single strand-specific metallo-endoribonuclease involved in late-stage 70S ribosome quality control and in maturation of the 3' terminus of the 16S rRNA.</text>
</comment>
<comment type="cofactor">
    <cofactor evidence="1">
        <name>Zn(2+)</name>
        <dbReference type="ChEBI" id="CHEBI:29105"/>
    </cofactor>
    <text evidence="1">Binds 1 zinc ion.</text>
</comment>
<comment type="subcellular location">
    <subcellularLocation>
        <location evidence="1">Cytoplasm</location>
    </subcellularLocation>
</comment>
<comment type="similarity">
    <text evidence="1">Belongs to the endoribonuclease YbeY family.</text>
</comment>
<feature type="chain" id="PRO_0000284240" description="Endoribonuclease YbeY">
    <location>
        <begin position="1"/>
        <end position="163"/>
    </location>
</feature>
<feature type="binding site" evidence="1">
    <location>
        <position position="126"/>
    </location>
    <ligand>
        <name>Zn(2+)</name>
        <dbReference type="ChEBI" id="CHEBI:29105"/>
        <note>catalytic</note>
    </ligand>
</feature>
<feature type="binding site" evidence="1">
    <location>
        <position position="130"/>
    </location>
    <ligand>
        <name>Zn(2+)</name>
        <dbReference type="ChEBI" id="CHEBI:29105"/>
        <note>catalytic</note>
    </ligand>
</feature>
<feature type="binding site" evidence="1">
    <location>
        <position position="136"/>
    </location>
    <ligand>
        <name>Zn(2+)</name>
        <dbReference type="ChEBI" id="CHEBI:29105"/>
        <note>catalytic</note>
    </ligand>
</feature>
<accession>Q11BD7</accession>
<name>YBEY_CHESB</name>
<keyword id="KW-0963">Cytoplasm</keyword>
<keyword id="KW-0255">Endonuclease</keyword>
<keyword id="KW-0378">Hydrolase</keyword>
<keyword id="KW-0479">Metal-binding</keyword>
<keyword id="KW-0540">Nuclease</keyword>
<keyword id="KW-0690">Ribosome biogenesis</keyword>
<keyword id="KW-0698">rRNA processing</keyword>
<keyword id="KW-0862">Zinc</keyword>
<proteinExistence type="inferred from homology"/>
<evidence type="ECO:0000255" key="1">
    <source>
        <dbReference type="HAMAP-Rule" id="MF_00009"/>
    </source>
</evidence>
<sequence length="163" mass="17750">MVEGEASSPAFTIDYAVATGDWPAEDVLRGLVERAVTAAAARTDGPLQASLSVLFTDDAEMRALNARFRGKDKPTNVLSFPAPDSMVPPGTPRHFGDIALGYETVSREAKEEGKSFEHHLTHLVVHGFLHLAGHDHETEVEAEEMEQLEREILQSLAIGDPYA</sequence>
<dbReference type="EC" id="3.1.-.-" evidence="1"/>
<dbReference type="EMBL" id="CP000390">
    <property type="protein sequence ID" value="ABG65288.1"/>
    <property type="molecule type" value="Genomic_DNA"/>
</dbReference>
<dbReference type="SMR" id="Q11BD7"/>
<dbReference type="STRING" id="266779.Meso_3921"/>
<dbReference type="KEGG" id="mes:Meso_3921"/>
<dbReference type="eggNOG" id="COG0319">
    <property type="taxonomic scope" value="Bacteria"/>
</dbReference>
<dbReference type="HOGENOM" id="CLU_106710_0_0_5"/>
<dbReference type="OrthoDB" id="9807740at2"/>
<dbReference type="GO" id="GO:0005737">
    <property type="term" value="C:cytoplasm"/>
    <property type="evidence" value="ECO:0007669"/>
    <property type="project" value="UniProtKB-SubCell"/>
</dbReference>
<dbReference type="GO" id="GO:0004222">
    <property type="term" value="F:metalloendopeptidase activity"/>
    <property type="evidence" value="ECO:0007669"/>
    <property type="project" value="InterPro"/>
</dbReference>
<dbReference type="GO" id="GO:0004521">
    <property type="term" value="F:RNA endonuclease activity"/>
    <property type="evidence" value="ECO:0007669"/>
    <property type="project" value="UniProtKB-UniRule"/>
</dbReference>
<dbReference type="GO" id="GO:0008270">
    <property type="term" value="F:zinc ion binding"/>
    <property type="evidence" value="ECO:0007669"/>
    <property type="project" value="UniProtKB-UniRule"/>
</dbReference>
<dbReference type="GO" id="GO:0006364">
    <property type="term" value="P:rRNA processing"/>
    <property type="evidence" value="ECO:0007669"/>
    <property type="project" value="UniProtKB-UniRule"/>
</dbReference>
<dbReference type="Gene3D" id="3.40.390.30">
    <property type="entry name" value="Metalloproteases ('zincins'), catalytic domain"/>
    <property type="match status" value="1"/>
</dbReference>
<dbReference type="HAMAP" id="MF_00009">
    <property type="entry name" value="Endoribonucl_YbeY"/>
    <property type="match status" value="1"/>
</dbReference>
<dbReference type="InterPro" id="IPR023091">
    <property type="entry name" value="MetalPrtase_cat_dom_sf_prd"/>
</dbReference>
<dbReference type="InterPro" id="IPR002036">
    <property type="entry name" value="YbeY"/>
</dbReference>
<dbReference type="InterPro" id="IPR020549">
    <property type="entry name" value="YbeY_CS"/>
</dbReference>
<dbReference type="NCBIfam" id="TIGR00043">
    <property type="entry name" value="rRNA maturation RNase YbeY"/>
    <property type="match status" value="1"/>
</dbReference>
<dbReference type="PANTHER" id="PTHR46986">
    <property type="entry name" value="ENDORIBONUCLEASE YBEY, CHLOROPLASTIC"/>
    <property type="match status" value="1"/>
</dbReference>
<dbReference type="PANTHER" id="PTHR46986:SF1">
    <property type="entry name" value="ENDORIBONUCLEASE YBEY, CHLOROPLASTIC"/>
    <property type="match status" value="1"/>
</dbReference>
<dbReference type="Pfam" id="PF02130">
    <property type="entry name" value="YbeY"/>
    <property type="match status" value="1"/>
</dbReference>
<dbReference type="SUPFAM" id="SSF55486">
    <property type="entry name" value="Metalloproteases ('zincins'), catalytic domain"/>
    <property type="match status" value="1"/>
</dbReference>
<dbReference type="PROSITE" id="PS01306">
    <property type="entry name" value="UPF0054"/>
    <property type="match status" value="1"/>
</dbReference>
<gene>
    <name evidence="1" type="primary">ybeY</name>
    <name type="ordered locus">Meso_3921</name>
</gene>
<protein>
    <recommendedName>
        <fullName evidence="1">Endoribonuclease YbeY</fullName>
        <ecNumber evidence="1">3.1.-.-</ecNumber>
    </recommendedName>
</protein>
<reference key="1">
    <citation type="submission" date="2006-06" db="EMBL/GenBank/DDBJ databases">
        <title>Complete sequence of chromosome of Mesorhizobium sp. BNC1.</title>
        <authorList>
            <consortium name="US DOE Joint Genome Institute"/>
            <person name="Copeland A."/>
            <person name="Lucas S."/>
            <person name="Lapidus A."/>
            <person name="Barry K."/>
            <person name="Detter J.C."/>
            <person name="Glavina del Rio T."/>
            <person name="Hammon N."/>
            <person name="Israni S."/>
            <person name="Dalin E."/>
            <person name="Tice H."/>
            <person name="Pitluck S."/>
            <person name="Chertkov O."/>
            <person name="Brettin T."/>
            <person name="Bruce D."/>
            <person name="Han C."/>
            <person name="Tapia R."/>
            <person name="Gilna P."/>
            <person name="Schmutz J."/>
            <person name="Larimer F."/>
            <person name="Land M."/>
            <person name="Hauser L."/>
            <person name="Kyrpides N."/>
            <person name="Mikhailova N."/>
            <person name="Richardson P."/>
        </authorList>
    </citation>
    <scope>NUCLEOTIDE SEQUENCE [LARGE SCALE GENOMIC DNA]</scope>
    <source>
        <strain>BNC1</strain>
    </source>
</reference>